<dbReference type="EMBL" id="AL030978">
    <property type="protein sequence ID" value="CAA19726.1"/>
    <property type="molecule type" value="Genomic_DNA"/>
</dbReference>
<dbReference type="EMBL" id="AL161566">
    <property type="protein sequence ID" value="CAB79587.1"/>
    <property type="molecule type" value="Genomic_DNA"/>
</dbReference>
<dbReference type="EMBL" id="CP002687">
    <property type="protein sequence ID" value="AEE85324.1"/>
    <property type="molecule type" value="Genomic_DNA"/>
</dbReference>
<dbReference type="EMBL" id="CP002687">
    <property type="protein sequence ID" value="ANM66181.1"/>
    <property type="molecule type" value="Genomic_DNA"/>
</dbReference>
<dbReference type="EMBL" id="AY123998">
    <property type="protein sequence ID" value="AAM74507.1"/>
    <property type="molecule type" value="mRNA"/>
</dbReference>
<dbReference type="EMBL" id="AY143840">
    <property type="protein sequence ID" value="AAN28779.1"/>
    <property type="molecule type" value="mRNA"/>
</dbReference>
<dbReference type="EMBL" id="AK318875">
    <property type="protein sequence ID" value="BAH56990.1"/>
    <property type="molecule type" value="mRNA"/>
</dbReference>
<dbReference type="EMBL" id="AK175197">
    <property type="protein sequence ID" value="BAD42960.1"/>
    <property type="molecule type" value="mRNA"/>
</dbReference>
<dbReference type="EMBL" id="AK175268">
    <property type="protein sequence ID" value="BAD43031.1"/>
    <property type="molecule type" value="mRNA"/>
</dbReference>
<dbReference type="EMBL" id="AK175342">
    <property type="protein sequence ID" value="BAD43105.1"/>
    <property type="molecule type" value="mRNA"/>
</dbReference>
<dbReference type="EMBL" id="AK175411">
    <property type="protein sequence ID" value="BAD43174.1"/>
    <property type="molecule type" value="mRNA"/>
</dbReference>
<dbReference type="EMBL" id="AK175423">
    <property type="protein sequence ID" value="BAD43186.1"/>
    <property type="molecule type" value="mRNA"/>
</dbReference>
<dbReference type="EMBL" id="AK175883">
    <property type="protein sequence ID" value="BAD43646.1"/>
    <property type="molecule type" value="mRNA"/>
</dbReference>
<dbReference type="EMBL" id="AK176355">
    <property type="protein sequence ID" value="BAD44118.1"/>
    <property type="molecule type" value="mRNA"/>
</dbReference>
<dbReference type="EMBL" id="AK176431">
    <property type="protein sequence ID" value="BAD44194.1"/>
    <property type="molecule type" value="mRNA"/>
</dbReference>
<dbReference type="EMBL" id="AK176530">
    <property type="protein sequence ID" value="BAD44293.1"/>
    <property type="molecule type" value="mRNA"/>
</dbReference>
<dbReference type="EMBL" id="AK176789">
    <property type="protein sequence ID" value="BAD44552.1"/>
    <property type="molecule type" value="mRNA"/>
</dbReference>
<dbReference type="EMBL" id="AK176819">
    <property type="protein sequence ID" value="BAD44582.1"/>
    <property type="molecule type" value="mRNA"/>
</dbReference>
<dbReference type="EMBL" id="AK176860">
    <property type="protein sequence ID" value="BAD44623.1"/>
    <property type="molecule type" value="mRNA"/>
</dbReference>
<dbReference type="EMBL" id="AK176877">
    <property type="protein sequence ID" value="BAD44640.1"/>
    <property type="molecule type" value="mRNA"/>
</dbReference>
<dbReference type="EMBL" id="AY084304">
    <property type="protein sequence ID" value="AAM60894.1"/>
    <property type="molecule type" value="mRNA"/>
</dbReference>
<dbReference type="PIR" id="T05756">
    <property type="entry name" value="T05756"/>
</dbReference>
<dbReference type="RefSeq" id="NP_001328092.1">
    <molecule id="Q8L4N1-2"/>
    <property type="nucleotide sequence ID" value="NM_001341845.1"/>
</dbReference>
<dbReference type="RefSeq" id="NP_567770.1">
    <molecule id="Q8L4N1-1"/>
    <property type="nucleotide sequence ID" value="NM_118866.5"/>
</dbReference>
<dbReference type="SMR" id="Q8L4N1"/>
<dbReference type="FunCoup" id="Q8L4N1">
    <property type="interactions" value="53"/>
</dbReference>
<dbReference type="STRING" id="3702.Q8L4N1"/>
<dbReference type="GlyGen" id="Q8L4N1">
    <property type="glycosylation" value="3 sites"/>
</dbReference>
<dbReference type="iPTMnet" id="Q8L4N1"/>
<dbReference type="PaxDb" id="3702-AT4G27320.1"/>
<dbReference type="ProteomicsDB" id="236677">
    <molecule id="Q8L4N1-1"/>
</dbReference>
<dbReference type="EnsemblPlants" id="AT4G27320.1">
    <molecule id="Q8L4N1-1"/>
    <property type="protein sequence ID" value="AT4G27320.1"/>
    <property type="gene ID" value="AT4G27320"/>
</dbReference>
<dbReference type="EnsemblPlants" id="AT4G27320.2">
    <molecule id="Q8L4N1-2"/>
    <property type="protein sequence ID" value="AT4G27320.2"/>
    <property type="gene ID" value="AT4G27320"/>
</dbReference>
<dbReference type="GeneID" id="828840"/>
<dbReference type="Gramene" id="AT4G27320.1">
    <molecule id="Q8L4N1-1"/>
    <property type="protein sequence ID" value="AT4G27320.1"/>
    <property type="gene ID" value="AT4G27320"/>
</dbReference>
<dbReference type="Gramene" id="AT4G27320.2">
    <molecule id="Q8L4N1-2"/>
    <property type="protein sequence ID" value="AT4G27320.2"/>
    <property type="gene ID" value="AT4G27320"/>
</dbReference>
<dbReference type="KEGG" id="ath:AT4G27320"/>
<dbReference type="Araport" id="AT4G27320"/>
<dbReference type="TAIR" id="AT4G27320">
    <property type="gene designation" value="PHOS34"/>
</dbReference>
<dbReference type="eggNOG" id="ENOG502RXH2">
    <property type="taxonomic scope" value="Eukaryota"/>
</dbReference>
<dbReference type="HOGENOM" id="CLU_049301_0_0_1"/>
<dbReference type="InParanoid" id="Q8L4N1"/>
<dbReference type="OMA" id="QLPHIRI"/>
<dbReference type="OrthoDB" id="843225at2759"/>
<dbReference type="PRO" id="PR:Q8L4N1"/>
<dbReference type="Proteomes" id="UP000006548">
    <property type="component" value="Chromosome 4"/>
</dbReference>
<dbReference type="ExpressionAtlas" id="Q8L4N1">
    <property type="expression patterns" value="baseline and differential"/>
</dbReference>
<dbReference type="GO" id="GO:0009507">
    <property type="term" value="C:chloroplast"/>
    <property type="evidence" value="ECO:0007669"/>
    <property type="project" value="UniProtKB-SubCell"/>
</dbReference>
<dbReference type="GO" id="GO:0005829">
    <property type="term" value="C:cytosol"/>
    <property type="evidence" value="ECO:0007005"/>
    <property type="project" value="TAIR"/>
</dbReference>
<dbReference type="GO" id="GO:0005524">
    <property type="term" value="F:ATP binding"/>
    <property type="evidence" value="ECO:0007669"/>
    <property type="project" value="UniProtKB-KW"/>
</dbReference>
<dbReference type="GO" id="GO:0002238">
    <property type="term" value="P:response to molecule of fungal origin"/>
    <property type="evidence" value="ECO:0000314"/>
    <property type="project" value="TAIR"/>
</dbReference>
<dbReference type="CDD" id="cd23659">
    <property type="entry name" value="USP_At3g01520-like"/>
    <property type="match status" value="1"/>
</dbReference>
<dbReference type="FunFam" id="3.40.50.620:FF:000201">
    <property type="entry name" value="Universal stress protein PHOS34"/>
    <property type="match status" value="1"/>
</dbReference>
<dbReference type="Gene3D" id="3.40.50.620">
    <property type="entry name" value="HUPs"/>
    <property type="match status" value="1"/>
</dbReference>
<dbReference type="InterPro" id="IPR044162">
    <property type="entry name" value="PHOS32/34"/>
</dbReference>
<dbReference type="InterPro" id="IPR014729">
    <property type="entry name" value="Rossmann-like_a/b/a_fold"/>
</dbReference>
<dbReference type="InterPro" id="IPR006015">
    <property type="entry name" value="Universal_stress_UspA"/>
</dbReference>
<dbReference type="InterPro" id="IPR006016">
    <property type="entry name" value="UspA"/>
</dbReference>
<dbReference type="PANTHER" id="PTHR31966">
    <property type="entry name" value="OS01G0783500 PROTEIN"/>
    <property type="match status" value="1"/>
</dbReference>
<dbReference type="PANTHER" id="PTHR31966:SF19">
    <property type="entry name" value="UNIVERSAL STRESS PROTEIN PHOS34"/>
    <property type="match status" value="1"/>
</dbReference>
<dbReference type="Pfam" id="PF00582">
    <property type="entry name" value="Usp"/>
    <property type="match status" value="1"/>
</dbReference>
<dbReference type="PRINTS" id="PR01438">
    <property type="entry name" value="UNVRSLSTRESS"/>
</dbReference>
<dbReference type="SUPFAM" id="SSF52402">
    <property type="entry name" value="Adenine nucleotide alpha hydrolases-like"/>
    <property type="match status" value="1"/>
</dbReference>
<sequence length="260" mass="28106">MNPDSDYPHLPNIKIHHPSSPRHSHHHSSSTPSAATPTPTAGARRKIGVAVDLSEESAFAVRWAVDHYIRPGDAVVILHVSPTSVLFGADWGPLPLQTPPPPSAATDPGAQPKPSQEDFDAFTSSKVADLAKPLKEAGFPHKIHIVKDHDMRERLCLETERLNLSAVIMGSRGFGAEKRGSDGKLGSVSDYCVHHCVCPVVVVRYPDDRDGPAPPGNVGATREAIVTVKSRRDDDDDDDEDHEAKIAAAASDHHEHIKDE</sequence>
<proteinExistence type="evidence at protein level"/>
<evidence type="ECO:0000250" key="1">
    <source>
        <dbReference type="UniProtKB" id="Q57997"/>
    </source>
</evidence>
<evidence type="ECO:0000250" key="2">
    <source>
        <dbReference type="UniProtKB" id="Q8VYN9"/>
    </source>
</evidence>
<evidence type="ECO:0000255" key="3"/>
<evidence type="ECO:0000256" key="4">
    <source>
        <dbReference type="SAM" id="MobiDB-lite"/>
    </source>
</evidence>
<evidence type="ECO:0000269" key="5">
    <source>
    </source>
</evidence>
<evidence type="ECO:0000269" key="6">
    <source>
    </source>
</evidence>
<evidence type="ECO:0000303" key="7">
    <source>
    </source>
</evidence>
<evidence type="ECO:0000303" key="8">
    <source>
    </source>
</evidence>
<evidence type="ECO:0000305" key="9"/>
<evidence type="ECO:0000312" key="10">
    <source>
        <dbReference type="Araport" id="AT4G27320"/>
    </source>
</evidence>
<evidence type="ECO:0000312" key="11">
    <source>
        <dbReference type="EMBL" id="AAM60894.1"/>
    </source>
</evidence>
<evidence type="ECO:0000312" key="12">
    <source>
        <dbReference type="EMBL" id="CAA19726.1"/>
    </source>
</evidence>
<reference key="1">
    <citation type="journal article" date="1999" name="Nature">
        <title>Sequence and analysis of chromosome 4 of the plant Arabidopsis thaliana.</title>
        <authorList>
            <person name="Mayer K.F.X."/>
            <person name="Schueller C."/>
            <person name="Wambutt R."/>
            <person name="Murphy G."/>
            <person name="Volckaert G."/>
            <person name="Pohl T."/>
            <person name="Duesterhoeft A."/>
            <person name="Stiekema W."/>
            <person name="Entian K.-D."/>
            <person name="Terryn N."/>
            <person name="Harris B."/>
            <person name="Ansorge W."/>
            <person name="Brandt P."/>
            <person name="Grivell L.A."/>
            <person name="Rieger M."/>
            <person name="Weichselgartner M."/>
            <person name="de Simone V."/>
            <person name="Obermaier B."/>
            <person name="Mache R."/>
            <person name="Mueller M."/>
            <person name="Kreis M."/>
            <person name="Delseny M."/>
            <person name="Puigdomenech P."/>
            <person name="Watson M."/>
            <person name="Schmidtheini T."/>
            <person name="Reichert B."/>
            <person name="Portetelle D."/>
            <person name="Perez-Alonso M."/>
            <person name="Boutry M."/>
            <person name="Bancroft I."/>
            <person name="Vos P."/>
            <person name="Hoheisel J."/>
            <person name="Zimmermann W."/>
            <person name="Wedler H."/>
            <person name="Ridley P."/>
            <person name="Langham S.-A."/>
            <person name="McCullagh B."/>
            <person name="Bilham L."/>
            <person name="Robben J."/>
            <person name="van der Schueren J."/>
            <person name="Grymonprez B."/>
            <person name="Chuang Y.-J."/>
            <person name="Vandenbussche F."/>
            <person name="Braeken M."/>
            <person name="Weltjens I."/>
            <person name="Voet M."/>
            <person name="Bastiaens I."/>
            <person name="Aert R."/>
            <person name="Defoor E."/>
            <person name="Weitzenegger T."/>
            <person name="Bothe G."/>
            <person name="Ramsperger U."/>
            <person name="Hilbert H."/>
            <person name="Braun M."/>
            <person name="Holzer E."/>
            <person name="Brandt A."/>
            <person name="Peters S."/>
            <person name="van Staveren M."/>
            <person name="Dirkse W."/>
            <person name="Mooijman P."/>
            <person name="Klein Lankhorst R."/>
            <person name="Rose M."/>
            <person name="Hauf J."/>
            <person name="Koetter P."/>
            <person name="Berneiser S."/>
            <person name="Hempel S."/>
            <person name="Feldpausch M."/>
            <person name="Lamberth S."/>
            <person name="Van den Daele H."/>
            <person name="De Keyser A."/>
            <person name="Buysshaert C."/>
            <person name="Gielen J."/>
            <person name="Villarroel R."/>
            <person name="De Clercq R."/>
            <person name="van Montagu M."/>
            <person name="Rogers J."/>
            <person name="Cronin A."/>
            <person name="Quail M.A."/>
            <person name="Bray-Allen S."/>
            <person name="Clark L."/>
            <person name="Doggett J."/>
            <person name="Hall S."/>
            <person name="Kay M."/>
            <person name="Lennard N."/>
            <person name="McLay K."/>
            <person name="Mayes R."/>
            <person name="Pettett A."/>
            <person name="Rajandream M.A."/>
            <person name="Lyne M."/>
            <person name="Benes V."/>
            <person name="Rechmann S."/>
            <person name="Borkova D."/>
            <person name="Bloecker H."/>
            <person name="Scharfe M."/>
            <person name="Grimm M."/>
            <person name="Loehnert T.-H."/>
            <person name="Dose S."/>
            <person name="de Haan M."/>
            <person name="Maarse A.C."/>
            <person name="Schaefer M."/>
            <person name="Mueller-Auer S."/>
            <person name="Gabel C."/>
            <person name="Fuchs M."/>
            <person name="Fartmann B."/>
            <person name="Granderath K."/>
            <person name="Dauner D."/>
            <person name="Herzl A."/>
            <person name="Neumann S."/>
            <person name="Argiriou A."/>
            <person name="Vitale D."/>
            <person name="Liguori R."/>
            <person name="Piravandi E."/>
            <person name="Massenet O."/>
            <person name="Quigley F."/>
            <person name="Clabauld G."/>
            <person name="Muendlein A."/>
            <person name="Felber R."/>
            <person name="Schnabl S."/>
            <person name="Hiller R."/>
            <person name="Schmidt W."/>
            <person name="Lecharny A."/>
            <person name="Aubourg S."/>
            <person name="Chefdor F."/>
            <person name="Cooke R."/>
            <person name="Berger C."/>
            <person name="Monfort A."/>
            <person name="Casacuberta E."/>
            <person name="Gibbons T."/>
            <person name="Weber N."/>
            <person name="Vandenbol M."/>
            <person name="Bargues M."/>
            <person name="Terol J."/>
            <person name="Torres A."/>
            <person name="Perez-Perez A."/>
            <person name="Purnelle B."/>
            <person name="Bent E."/>
            <person name="Johnson S."/>
            <person name="Tacon D."/>
            <person name="Jesse T."/>
            <person name="Heijnen L."/>
            <person name="Schwarz S."/>
            <person name="Scholler P."/>
            <person name="Heber S."/>
            <person name="Francs P."/>
            <person name="Bielke C."/>
            <person name="Frishman D."/>
            <person name="Haase D."/>
            <person name="Lemcke K."/>
            <person name="Mewes H.-W."/>
            <person name="Stocker S."/>
            <person name="Zaccaria P."/>
            <person name="Bevan M."/>
            <person name="Wilson R.K."/>
            <person name="de la Bastide M."/>
            <person name="Habermann K."/>
            <person name="Parnell L."/>
            <person name="Dedhia N."/>
            <person name="Gnoj L."/>
            <person name="Schutz K."/>
            <person name="Huang E."/>
            <person name="Spiegel L."/>
            <person name="Sekhon M."/>
            <person name="Murray J."/>
            <person name="Sheet P."/>
            <person name="Cordes M."/>
            <person name="Abu-Threideh J."/>
            <person name="Stoneking T."/>
            <person name="Kalicki J."/>
            <person name="Graves T."/>
            <person name="Harmon G."/>
            <person name="Edwards J."/>
            <person name="Latreille P."/>
            <person name="Courtney L."/>
            <person name="Cloud J."/>
            <person name="Abbott A."/>
            <person name="Scott K."/>
            <person name="Johnson D."/>
            <person name="Minx P."/>
            <person name="Bentley D."/>
            <person name="Fulton B."/>
            <person name="Miller N."/>
            <person name="Greco T."/>
            <person name="Kemp K."/>
            <person name="Kramer J."/>
            <person name="Fulton L."/>
            <person name="Mardis E."/>
            <person name="Dante M."/>
            <person name="Pepin K."/>
            <person name="Hillier L.W."/>
            <person name="Nelson J."/>
            <person name="Spieth J."/>
            <person name="Ryan E."/>
            <person name="Andrews S."/>
            <person name="Geisel C."/>
            <person name="Layman D."/>
            <person name="Du H."/>
            <person name="Ali J."/>
            <person name="Berghoff A."/>
            <person name="Jones K."/>
            <person name="Drone K."/>
            <person name="Cotton M."/>
            <person name="Joshu C."/>
            <person name="Antonoiu B."/>
            <person name="Zidanic M."/>
            <person name="Strong C."/>
            <person name="Sun H."/>
            <person name="Lamar B."/>
            <person name="Yordan C."/>
            <person name="Ma P."/>
            <person name="Zhong J."/>
            <person name="Preston R."/>
            <person name="Vil D."/>
            <person name="Shekher M."/>
            <person name="Matero A."/>
            <person name="Shah R."/>
            <person name="Swaby I.K."/>
            <person name="O'Shaughnessy A."/>
            <person name="Rodriguez M."/>
            <person name="Hoffman J."/>
            <person name="Till S."/>
            <person name="Granat S."/>
            <person name="Shohdy N."/>
            <person name="Hasegawa A."/>
            <person name="Hameed A."/>
            <person name="Lodhi M."/>
            <person name="Johnson A."/>
            <person name="Chen E."/>
            <person name="Marra M.A."/>
            <person name="Martienssen R."/>
            <person name="McCombie W.R."/>
        </authorList>
    </citation>
    <scope>NUCLEOTIDE SEQUENCE [LARGE SCALE GENOMIC DNA]</scope>
    <source>
        <strain>cv. Columbia</strain>
    </source>
</reference>
<reference key="2">
    <citation type="journal article" date="2017" name="Plant J.">
        <title>Araport11: a complete reannotation of the Arabidopsis thaliana reference genome.</title>
        <authorList>
            <person name="Cheng C.Y."/>
            <person name="Krishnakumar V."/>
            <person name="Chan A.P."/>
            <person name="Thibaud-Nissen F."/>
            <person name="Schobel S."/>
            <person name="Town C.D."/>
        </authorList>
    </citation>
    <scope>GENOME REANNOTATION</scope>
    <source>
        <strain>cv. Columbia</strain>
    </source>
</reference>
<reference key="3">
    <citation type="journal article" date="2003" name="Science">
        <title>Empirical analysis of transcriptional activity in the Arabidopsis genome.</title>
        <authorList>
            <person name="Yamada K."/>
            <person name="Lim J."/>
            <person name="Dale J.M."/>
            <person name="Chen H."/>
            <person name="Shinn P."/>
            <person name="Palm C.J."/>
            <person name="Southwick A.M."/>
            <person name="Wu H.C."/>
            <person name="Kim C.J."/>
            <person name="Nguyen M."/>
            <person name="Pham P.K."/>
            <person name="Cheuk R.F."/>
            <person name="Karlin-Newmann G."/>
            <person name="Liu S.X."/>
            <person name="Lam B."/>
            <person name="Sakano H."/>
            <person name="Wu T."/>
            <person name="Yu G."/>
            <person name="Miranda M."/>
            <person name="Quach H.L."/>
            <person name="Tripp M."/>
            <person name="Chang C.H."/>
            <person name="Lee J.M."/>
            <person name="Toriumi M.J."/>
            <person name="Chan M.M."/>
            <person name="Tang C.C."/>
            <person name="Onodera C.S."/>
            <person name="Deng J.M."/>
            <person name="Akiyama K."/>
            <person name="Ansari Y."/>
            <person name="Arakawa T."/>
            <person name="Banh J."/>
            <person name="Banno F."/>
            <person name="Bowser L."/>
            <person name="Brooks S.Y."/>
            <person name="Carninci P."/>
            <person name="Chao Q."/>
            <person name="Choy N."/>
            <person name="Enju A."/>
            <person name="Goldsmith A.D."/>
            <person name="Gurjal M."/>
            <person name="Hansen N.F."/>
            <person name="Hayashizaki Y."/>
            <person name="Johnson-Hopson C."/>
            <person name="Hsuan V.W."/>
            <person name="Iida K."/>
            <person name="Karnes M."/>
            <person name="Khan S."/>
            <person name="Koesema E."/>
            <person name="Ishida J."/>
            <person name="Jiang P.X."/>
            <person name="Jones T."/>
            <person name="Kawai J."/>
            <person name="Kamiya A."/>
            <person name="Meyers C."/>
            <person name="Nakajima M."/>
            <person name="Narusaka M."/>
            <person name="Seki M."/>
            <person name="Sakurai T."/>
            <person name="Satou M."/>
            <person name="Tamse R."/>
            <person name="Vaysberg M."/>
            <person name="Wallender E.K."/>
            <person name="Wong C."/>
            <person name="Yamamura Y."/>
            <person name="Yuan S."/>
            <person name="Shinozaki K."/>
            <person name="Davis R.W."/>
            <person name="Theologis A."/>
            <person name="Ecker J.R."/>
        </authorList>
    </citation>
    <scope>NUCLEOTIDE SEQUENCE [LARGE SCALE MRNA] (ISOFORM 1)</scope>
    <source>
        <strain>cv. Columbia</strain>
    </source>
</reference>
<reference key="4">
    <citation type="journal article" date="2009" name="DNA Res.">
        <title>Analysis of multiple occurrences of alternative splicing events in Arabidopsis thaliana using novel sequenced full-length cDNAs.</title>
        <authorList>
            <person name="Iida K."/>
            <person name="Fukami-Kobayashi K."/>
            <person name="Toyoda A."/>
            <person name="Sakaki Y."/>
            <person name="Kobayashi M."/>
            <person name="Seki M."/>
            <person name="Shinozaki K."/>
        </authorList>
    </citation>
    <scope>NUCLEOTIDE SEQUENCE [LARGE SCALE MRNA] (ISOFORM 2)</scope>
    <source>
        <strain>cv. Columbia</strain>
    </source>
</reference>
<reference key="5">
    <citation type="submission" date="2004-09" db="EMBL/GenBank/DDBJ databases">
        <title>Large-scale analysis of RIKEN Arabidopsis full-length (RAFL) cDNAs.</title>
        <authorList>
            <person name="Totoki Y."/>
            <person name="Seki M."/>
            <person name="Ishida J."/>
            <person name="Nakajima M."/>
            <person name="Enju A."/>
            <person name="Kamiya A."/>
            <person name="Narusaka M."/>
            <person name="Shin-i T."/>
            <person name="Nakagawa M."/>
            <person name="Sakamoto N."/>
            <person name="Oishi K."/>
            <person name="Kohara Y."/>
            <person name="Kobayashi M."/>
            <person name="Toyoda A."/>
            <person name="Sakaki Y."/>
            <person name="Sakurai T."/>
            <person name="Iida K."/>
            <person name="Akiyama K."/>
            <person name="Satou M."/>
            <person name="Toyoda T."/>
            <person name="Konagaya A."/>
            <person name="Carninci P."/>
            <person name="Kawai J."/>
            <person name="Hayashizaki Y."/>
            <person name="Shinozaki K."/>
        </authorList>
    </citation>
    <scope>NUCLEOTIDE SEQUENCE [LARGE SCALE MRNA] (ISOFORM 1)</scope>
    <source>
        <strain>cv. Columbia</strain>
    </source>
</reference>
<reference key="6">
    <citation type="submission" date="2002-03" db="EMBL/GenBank/DDBJ databases">
        <title>Full-length cDNA from Arabidopsis thaliana.</title>
        <authorList>
            <person name="Brover V.V."/>
            <person name="Troukhan M.E."/>
            <person name="Alexandrov N.A."/>
            <person name="Lu Y.-P."/>
            <person name="Flavell R.B."/>
            <person name="Feldmann K.A."/>
        </authorList>
    </citation>
    <scope>NUCLEOTIDE SEQUENCE [LARGE SCALE MRNA] (ISOFORM 1)</scope>
</reference>
<reference key="7">
    <citation type="journal article" date="2003" name="Plant Physiol.">
        <title>Arabidopsis proteins containing similarity to the universal stress protein domain of bacteria.</title>
        <authorList>
            <person name="Kerk D."/>
            <person name="Bulgrien J."/>
            <person name="Smith D.W."/>
            <person name="Gribskov M."/>
        </authorList>
    </citation>
    <scope>IDENTIFICATION</scope>
</reference>
<reference key="8">
    <citation type="journal article" date="2008" name="J. Biol. Chem.">
        <title>An Arabidopsis protein phosphorylated in response to microbial elicitation, AtPHOS32, is a substrate of MAP kinases 3 and 6.</title>
        <authorList>
            <person name="Merkouropoulos G."/>
            <person name="Andreasson E."/>
            <person name="Hess D."/>
            <person name="Boller T."/>
            <person name="Peck S.C."/>
        </authorList>
    </citation>
    <scope>PHOSPHORYLATION UPON BACTERIAL ELICITATION</scope>
    <scope>NICKEL-BINDING</scope>
    <source>
        <strain>cv. Landsberg erecta</strain>
    </source>
</reference>
<reference key="9">
    <citation type="journal article" date="2008" name="Mol. Plant Microbe Interact.">
        <title>Enrichment of phosphoproteins and phosphopeptide derivatization identify universal stress proteins in elicitor-treated Arabidopsis.</title>
        <authorList>
            <person name="Lenman M."/>
            <person name="Soerensson C."/>
            <person name="Andreasson E."/>
        </authorList>
    </citation>
    <scope>PHOSPHORYLATION UPON INFECTION BY PHYTOPHTHORA INFESTANS ZOOSPORES AND XYLANASE</scope>
    <scope>PHOSPHORYLATION AT SER-20</scope>
    <source>
        <strain>cv. Landsberg erecta</strain>
    </source>
</reference>
<comment type="subcellular location">
    <subcellularLocation>
        <location evidence="3">Plastid</location>
        <location evidence="3">Chloroplast</location>
    </subcellularLocation>
</comment>
<comment type="alternative products">
    <event type="alternative splicing"/>
    <isoform>
        <id>Q8L4N1-1</id>
        <name>1</name>
        <sequence type="displayed"/>
    </isoform>
    <isoform>
        <id>Q8L4N1-2</id>
        <name>2</name>
        <sequence type="described" ref="VSP_058350"/>
    </isoform>
</comment>
<comment type="PTM">
    <text evidence="5 6">Phosphorylated by MAPK3 and MAPK6 after pathogenic elicitation (e.g. bacterial flg22, Phytophthora infestans zoospores and xylanase).</text>
</comment>
<comment type="miscellaneous">
    <text evidence="5">Can bind nickel.</text>
</comment>
<comment type="similarity">
    <text evidence="9">Belongs to the universal stress protein A family.</text>
</comment>
<keyword id="KW-0025">Alternative splicing</keyword>
<keyword id="KW-0067">ATP-binding</keyword>
<keyword id="KW-0150">Chloroplast</keyword>
<keyword id="KW-0547">Nucleotide-binding</keyword>
<keyword id="KW-0597">Phosphoprotein</keyword>
<keyword id="KW-0934">Plastid</keyword>
<keyword id="KW-1185">Reference proteome</keyword>
<keyword id="KW-0809">Transit peptide</keyword>
<name>PHO34_ARATH</name>
<organism evidence="11">
    <name type="scientific">Arabidopsis thaliana</name>
    <name type="common">Mouse-ear cress</name>
    <dbReference type="NCBI Taxonomy" id="3702"/>
    <lineage>
        <taxon>Eukaryota</taxon>
        <taxon>Viridiplantae</taxon>
        <taxon>Streptophyta</taxon>
        <taxon>Embryophyta</taxon>
        <taxon>Tracheophyta</taxon>
        <taxon>Spermatophyta</taxon>
        <taxon>Magnoliopsida</taxon>
        <taxon>eudicotyledons</taxon>
        <taxon>Gunneridae</taxon>
        <taxon>Pentapetalae</taxon>
        <taxon>rosids</taxon>
        <taxon>malvids</taxon>
        <taxon>Brassicales</taxon>
        <taxon>Brassicaceae</taxon>
        <taxon>Camelineae</taxon>
        <taxon>Arabidopsis</taxon>
    </lineage>
</organism>
<protein>
    <recommendedName>
        <fullName evidence="7">Universal stress protein PHOS34</fullName>
    </recommendedName>
    <alternativeName>
        <fullName evidence="8">Phosphorylated protein of 34 kDa</fullName>
        <shortName evidence="8">AtPHOS34</shortName>
    </alternativeName>
</protein>
<gene>
    <name evidence="8" type="primary">PHOS34</name>
    <name evidence="10" type="ordered locus">At4g27320</name>
    <name evidence="12" type="ORF">M4I22.130</name>
</gene>
<feature type="transit peptide" description="Chloroplast" evidence="3">
    <location>
        <begin position="1"/>
        <end position="33"/>
    </location>
</feature>
<feature type="chain" id="PRO_0000436335" description="Universal stress protein PHOS34">
    <location>
        <begin position="34"/>
        <end position="260"/>
    </location>
</feature>
<feature type="region of interest" description="Disordered" evidence="4">
    <location>
        <begin position="1"/>
        <end position="42"/>
    </location>
</feature>
<feature type="region of interest" description="Disordered" evidence="4">
    <location>
        <begin position="92"/>
        <end position="118"/>
    </location>
</feature>
<feature type="region of interest" description="Disordered" evidence="4">
    <location>
        <begin position="209"/>
        <end position="260"/>
    </location>
</feature>
<feature type="compositionally biased region" description="Basic residues" evidence="4">
    <location>
        <begin position="14"/>
        <end position="28"/>
    </location>
</feature>
<feature type="compositionally biased region" description="Low complexity" evidence="4">
    <location>
        <begin position="29"/>
        <end position="41"/>
    </location>
</feature>
<feature type="compositionally biased region" description="Basic and acidic residues" evidence="4">
    <location>
        <begin position="251"/>
        <end position="260"/>
    </location>
</feature>
<feature type="binding site" evidence="1">
    <location>
        <position position="18"/>
    </location>
    <ligand>
        <name>ATP</name>
        <dbReference type="ChEBI" id="CHEBI:30616"/>
    </ligand>
</feature>
<feature type="binding site" evidence="1">
    <location>
        <position position="80"/>
    </location>
    <ligand>
        <name>ATP</name>
        <dbReference type="ChEBI" id="CHEBI:30616"/>
    </ligand>
</feature>
<feature type="binding site" evidence="1">
    <location>
        <begin position="170"/>
        <end position="179"/>
    </location>
    <ligand>
        <name>ATP</name>
        <dbReference type="ChEBI" id="CHEBI:30616"/>
    </ligand>
</feature>
<feature type="binding site" evidence="1">
    <location>
        <begin position="187"/>
        <end position="189"/>
    </location>
    <ligand>
        <name>ATP</name>
        <dbReference type="ChEBI" id="CHEBI:30616"/>
    </ligand>
</feature>
<feature type="modified residue" description="Phosphoserine; by MAPK3 and MAPK6" evidence="6">
    <location>
        <position position="20"/>
    </location>
</feature>
<feature type="modified residue" description="Phosphoserine" evidence="2">
    <location>
        <position position="230"/>
    </location>
</feature>
<feature type="splice variant" id="VSP_058350" description="In isoform 2.">
    <original>DE</original>
    <variation>G</variation>
    <location>
        <begin position="259"/>
        <end position="260"/>
    </location>
</feature>
<feature type="sequence conflict" description="In Ref. 5; BAD44118." evidence="9" ref="5">
    <original>L</original>
    <variation>F</variation>
    <location>
        <position position="94"/>
    </location>
</feature>
<feature type="sequence conflict" description="In Ref. 5; BAD43646." evidence="9" ref="5">
    <original>L</original>
    <variation>I</variation>
    <location>
        <position position="96"/>
    </location>
</feature>
<feature type="sequence conflict" description="In Ref. 5; BAD43031." evidence="9" ref="5">
    <original>G</original>
    <variation>E</variation>
    <location>
        <position position="138"/>
    </location>
</feature>
<feature type="sequence conflict" description="In Ref. 5; BAD44582." evidence="9" ref="5">
    <original>D</original>
    <variation>G</variation>
    <location>
        <position position="182"/>
    </location>
</feature>
<feature type="sequence conflict" description="In Ref. 5; BAD44623." evidence="9" ref="5">
    <original>P</original>
    <variation>L</variation>
    <location>
        <position position="215"/>
    </location>
</feature>
<accession>Q8L4N1</accession>
<accession>O81835</accession>
<accession>Q67XF9</accession>
<accession>Q67XK0</accession>
<accession>Q67YW3</accession>
<accession>Q680I4</accession>
<accession>Q682U9</accession>